<protein>
    <recommendedName>
        <fullName evidence="1">Peptide chain release factor 3</fullName>
        <shortName evidence="1">RF-3</shortName>
    </recommendedName>
</protein>
<proteinExistence type="inferred from homology"/>
<comment type="function">
    <text evidence="1">Increases the formation of ribosomal termination complexes and stimulates activities of RF-1 and RF-2. It binds guanine nucleotides and has strong preference for UGA stop codons. It may interact directly with the ribosome. The stimulation of RF-1 and RF-2 is significantly reduced by GTP and GDP, but not by GMP.</text>
</comment>
<comment type="subcellular location">
    <subcellularLocation>
        <location evidence="1">Cytoplasm</location>
    </subcellularLocation>
</comment>
<comment type="similarity">
    <text evidence="1">Belongs to the TRAFAC class translation factor GTPase superfamily. Classic translation factor GTPase family. PrfC subfamily.</text>
</comment>
<organism>
    <name type="scientific">Acaryochloris marina (strain MBIC 11017)</name>
    <dbReference type="NCBI Taxonomy" id="329726"/>
    <lineage>
        <taxon>Bacteria</taxon>
        <taxon>Bacillati</taxon>
        <taxon>Cyanobacteriota</taxon>
        <taxon>Cyanophyceae</taxon>
        <taxon>Acaryochloridales</taxon>
        <taxon>Acaryochloridaceae</taxon>
        <taxon>Acaryochloris</taxon>
    </lineage>
</organism>
<name>RF3_ACAM1</name>
<feature type="chain" id="PRO_1000075156" description="Peptide chain release factor 3">
    <location>
        <begin position="1"/>
        <end position="541"/>
    </location>
</feature>
<feature type="domain" description="tr-type G">
    <location>
        <begin position="14"/>
        <end position="283"/>
    </location>
</feature>
<feature type="binding site" evidence="1">
    <location>
        <begin position="23"/>
        <end position="30"/>
    </location>
    <ligand>
        <name>GTP</name>
        <dbReference type="ChEBI" id="CHEBI:37565"/>
    </ligand>
</feature>
<feature type="binding site" evidence="1">
    <location>
        <begin position="91"/>
        <end position="95"/>
    </location>
    <ligand>
        <name>GTP</name>
        <dbReference type="ChEBI" id="CHEBI:37565"/>
    </ligand>
</feature>
<feature type="binding site" evidence="1">
    <location>
        <begin position="145"/>
        <end position="148"/>
    </location>
    <ligand>
        <name>GTP</name>
        <dbReference type="ChEBI" id="CHEBI:37565"/>
    </ligand>
</feature>
<accession>B0C6Z1</accession>
<sequence>MPTELQTELAEAVEARRNFAIISHPDAGKTTLTEKLLLYGGAIHEAGAVKARRAQRHATSDWMEMEQQRGISITSTVLQFAYQHCQINLLDTPGHQDFSEDTYRTLAAADNAVMLVDAAKGLEPQTRKLFEVCKLRSLPIFTFINKLDRPGREPLELLDEIEQELGLQTYAVNWPIGMGDRFQGVFDRRSRKIHLFQRSDHGKREAIDTQIDLGDPQIESLLDQELYFQLKDELELIEELGSPLDLEQVHNGQMTPIFFGSAMTNFGVELFLEAFLDYALKPGAYESTQGTIEPTYEDFSGFVFKLQANMDPKHRDRVAFIRVCSGKFEKDMTVSHARTGKTIRLSRPQKLFAQGRNSLEEAYPGDIIGLNNPGVFAIGDTIFKGKKLAYEGIPCFSPELFAYLKNPNPSKFKQFQKGVSELREEGAVQIMYSEDEIKRDPILAAVGQLQFEVVQFRLQNEYGVETRLELLPYSVARWVKGGWSALESVGRIFNAITVKDSWGRPVLLFKNEWNLHQVHGDHPDLELSAIAPLAVDQNMVS</sequence>
<evidence type="ECO:0000255" key="1">
    <source>
        <dbReference type="HAMAP-Rule" id="MF_00072"/>
    </source>
</evidence>
<keyword id="KW-0963">Cytoplasm</keyword>
<keyword id="KW-0342">GTP-binding</keyword>
<keyword id="KW-0547">Nucleotide-binding</keyword>
<keyword id="KW-0648">Protein biosynthesis</keyword>
<keyword id="KW-1185">Reference proteome</keyword>
<dbReference type="EMBL" id="CP000828">
    <property type="protein sequence ID" value="ABW28830.1"/>
    <property type="molecule type" value="Genomic_DNA"/>
</dbReference>
<dbReference type="RefSeq" id="WP_012164200.1">
    <property type="nucleotide sequence ID" value="NC_009925.1"/>
</dbReference>
<dbReference type="SMR" id="B0C6Z1"/>
<dbReference type="STRING" id="329726.AM1_3845"/>
<dbReference type="KEGG" id="amr:AM1_3845"/>
<dbReference type="eggNOG" id="COG4108">
    <property type="taxonomic scope" value="Bacteria"/>
</dbReference>
<dbReference type="HOGENOM" id="CLU_002794_2_1_3"/>
<dbReference type="OrthoDB" id="580826at2"/>
<dbReference type="Proteomes" id="UP000000268">
    <property type="component" value="Chromosome"/>
</dbReference>
<dbReference type="GO" id="GO:0005829">
    <property type="term" value="C:cytosol"/>
    <property type="evidence" value="ECO:0007669"/>
    <property type="project" value="TreeGrafter"/>
</dbReference>
<dbReference type="GO" id="GO:0005525">
    <property type="term" value="F:GTP binding"/>
    <property type="evidence" value="ECO:0007669"/>
    <property type="project" value="UniProtKB-UniRule"/>
</dbReference>
<dbReference type="GO" id="GO:0003924">
    <property type="term" value="F:GTPase activity"/>
    <property type="evidence" value="ECO:0007669"/>
    <property type="project" value="InterPro"/>
</dbReference>
<dbReference type="GO" id="GO:0016150">
    <property type="term" value="F:translation release factor activity, codon nonspecific"/>
    <property type="evidence" value="ECO:0007669"/>
    <property type="project" value="TreeGrafter"/>
</dbReference>
<dbReference type="GO" id="GO:0016149">
    <property type="term" value="F:translation release factor activity, codon specific"/>
    <property type="evidence" value="ECO:0007669"/>
    <property type="project" value="UniProtKB-UniRule"/>
</dbReference>
<dbReference type="GO" id="GO:0006449">
    <property type="term" value="P:regulation of translational termination"/>
    <property type="evidence" value="ECO:0007669"/>
    <property type="project" value="UniProtKB-UniRule"/>
</dbReference>
<dbReference type="CDD" id="cd04169">
    <property type="entry name" value="RF3"/>
    <property type="match status" value="1"/>
</dbReference>
<dbReference type="CDD" id="cd03689">
    <property type="entry name" value="RF3_II"/>
    <property type="match status" value="1"/>
</dbReference>
<dbReference type="CDD" id="cd16259">
    <property type="entry name" value="RF3_III"/>
    <property type="match status" value="1"/>
</dbReference>
<dbReference type="FunFam" id="2.40.30.10:FF:000040">
    <property type="entry name" value="Peptide chain release factor 3"/>
    <property type="match status" value="1"/>
</dbReference>
<dbReference type="FunFam" id="3.30.70.3280:FF:000001">
    <property type="entry name" value="Peptide chain release factor 3"/>
    <property type="match status" value="1"/>
</dbReference>
<dbReference type="FunFam" id="3.40.50.300:FF:000542">
    <property type="entry name" value="Peptide chain release factor 3"/>
    <property type="match status" value="1"/>
</dbReference>
<dbReference type="Gene3D" id="3.40.50.300">
    <property type="entry name" value="P-loop containing nucleotide triphosphate hydrolases"/>
    <property type="match status" value="1"/>
</dbReference>
<dbReference type="Gene3D" id="3.30.70.3280">
    <property type="entry name" value="Peptide chain release factor 3, domain III"/>
    <property type="match status" value="1"/>
</dbReference>
<dbReference type="Gene3D" id="2.40.30.10">
    <property type="entry name" value="Translation factors"/>
    <property type="match status" value="1"/>
</dbReference>
<dbReference type="HAMAP" id="MF_00072">
    <property type="entry name" value="Rel_fac_3"/>
    <property type="match status" value="1"/>
</dbReference>
<dbReference type="InterPro" id="IPR053905">
    <property type="entry name" value="EF-G-like_DII"/>
</dbReference>
<dbReference type="InterPro" id="IPR035647">
    <property type="entry name" value="EFG_III/V"/>
</dbReference>
<dbReference type="InterPro" id="IPR031157">
    <property type="entry name" value="G_TR_CS"/>
</dbReference>
<dbReference type="InterPro" id="IPR027417">
    <property type="entry name" value="P-loop_NTPase"/>
</dbReference>
<dbReference type="InterPro" id="IPR004548">
    <property type="entry name" value="PrfC"/>
</dbReference>
<dbReference type="InterPro" id="IPR032090">
    <property type="entry name" value="RF3_C"/>
</dbReference>
<dbReference type="InterPro" id="IPR038467">
    <property type="entry name" value="RF3_dom_3_sf"/>
</dbReference>
<dbReference type="InterPro" id="IPR041732">
    <property type="entry name" value="RF3_GTP-bd"/>
</dbReference>
<dbReference type="InterPro" id="IPR005225">
    <property type="entry name" value="Small_GTP-bd"/>
</dbReference>
<dbReference type="InterPro" id="IPR000795">
    <property type="entry name" value="T_Tr_GTP-bd_dom"/>
</dbReference>
<dbReference type="InterPro" id="IPR009000">
    <property type="entry name" value="Transl_B-barrel_sf"/>
</dbReference>
<dbReference type="NCBIfam" id="TIGR00503">
    <property type="entry name" value="prfC"/>
    <property type="match status" value="1"/>
</dbReference>
<dbReference type="NCBIfam" id="NF001964">
    <property type="entry name" value="PRK00741.1"/>
    <property type="match status" value="1"/>
</dbReference>
<dbReference type="NCBIfam" id="TIGR00231">
    <property type="entry name" value="small_GTP"/>
    <property type="match status" value="1"/>
</dbReference>
<dbReference type="PANTHER" id="PTHR43556">
    <property type="entry name" value="PEPTIDE CHAIN RELEASE FACTOR RF3"/>
    <property type="match status" value="1"/>
</dbReference>
<dbReference type="PANTHER" id="PTHR43556:SF2">
    <property type="entry name" value="PEPTIDE CHAIN RELEASE FACTOR RF3"/>
    <property type="match status" value="1"/>
</dbReference>
<dbReference type="Pfam" id="PF22042">
    <property type="entry name" value="EF-G_D2"/>
    <property type="match status" value="1"/>
</dbReference>
<dbReference type="Pfam" id="PF00009">
    <property type="entry name" value="GTP_EFTU"/>
    <property type="match status" value="1"/>
</dbReference>
<dbReference type="Pfam" id="PF16658">
    <property type="entry name" value="RF3_C"/>
    <property type="match status" value="1"/>
</dbReference>
<dbReference type="PRINTS" id="PR00315">
    <property type="entry name" value="ELONGATNFCT"/>
</dbReference>
<dbReference type="SUPFAM" id="SSF54980">
    <property type="entry name" value="EF-G C-terminal domain-like"/>
    <property type="match status" value="1"/>
</dbReference>
<dbReference type="SUPFAM" id="SSF52540">
    <property type="entry name" value="P-loop containing nucleoside triphosphate hydrolases"/>
    <property type="match status" value="1"/>
</dbReference>
<dbReference type="SUPFAM" id="SSF50447">
    <property type="entry name" value="Translation proteins"/>
    <property type="match status" value="1"/>
</dbReference>
<dbReference type="PROSITE" id="PS00301">
    <property type="entry name" value="G_TR_1"/>
    <property type="match status" value="1"/>
</dbReference>
<dbReference type="PROSITE" id="PS51722">
    <property type="entry name" value="G_TR_2"/>
    <property type="match status" value="1"/>
</dbReference>
<gene>
    <name evidence="1" type="primary">prfC</name>
    <name type="ordered locus">AM1_3845</name>
</gene>
<reference key="1">
    <citation type="journal article" date="2008" name="Proc. Natl. Acad. Sci. U.S.A.">
        <title>Niche adaptation and genome expansion in the chlorophyll d-producing cyanobacterium Acaryochloris marina.</title>
        <authorList>
            <person name="Swingley W.D."/>
            <person name="Chen M."/>
            <person name="Cheung P.C."/>
            <person name="Conrad A.L."/>
            <person name="Dejesa L.C."/>
            <person name="Hao J."/>
            <person name="Honchak B.M."/>
            <person name="Karbach L.E."/>
            <person name="Kurdoglu A."/>
            <person name="Lahiri S."/>
            <person name="Mastrian S.D."/>
            <person name="Miyashita H."/>
            <person name="Page L."/>
            <person name="Ramakrishna P."/>
            <person name="Satoh S."/>
            <person name="Sattley W.M."/>
            <person name="Shimada Y."/>
            <person name="Taylor H.L."/>
            <person name="Tomo T."/>
            <person name="Tsuchiya T."/>
            <person name="Wang Z.T."/>
            <person name="Raymond J."/>
            <person name="Mimuro M."/>
            <person name="Blankenship R.E."/>
            <person name="Touchman J.W."/>
        </authorList>
    </citation>
    <scope>NUCLEOTIDE SEQUENCE [LARGE SCALE GENOMIC DNA]</scope>
    <source>
        <strain>MBIC 11017</strain>
    </source>
</reference>